<feature type="chain" id="PRO_0000113166" description="Aspartate carbamoyltransferase catalytic subunit">
    <location>
        <begin position="1"/>
        <end position="316"/>
    </location>
</feature>
<feature type="binding site" evidence="1">
    <location>
        <position position="66"/>
    </location>
    <ligand>
        <name>carbamoyl phosphate</name>
        <dbReference type="ChEBI" id="CHEBI:58228"/>
    </ligand>
</feature>
<feature type="binding site" evidence="1">
    <location>
        <position position="67"/>
    </location>
    <ligand>
        <name>carbamoyl phosphate</name>
        <dbReference type="ChEBI" id="CHEBI:58228"/>
    </ligand>
</feature>
<feature type="binding site" evidence="1">
    <location>
        <position position="94"/>
    </location>
    <ligand>
        <name>L-aspartate</name>
        <dbReference type="ChEBI" id="CHEBI:29991"/>
    </ligand>
</feature>
<feature type="binding site" evidence="1">
    <location>
        <position position="116"/>
    </location>
    <ligand>
        <name>carbamoyl phosphate</name>
        <dbReference type="ChEBI" id="CHEBI:58228"/>
    </ligand>
</feature>
<feature type="binding site" evidence="1">
    <location>
        <position position="146"/>
    </location>
    <ligand>
        <name>carbamoyl phosphate</name>
        <dbReference type="ChEBI" id="CHEBI:58228"/>
    </ligand>
</feature>
<feature type="binding site" evidence="1">
    <location>
        <position position="149"/>
    </location>
    <ligand>
        <name>carbamoyl phosphate</name>
        <dbReference type="ChEBI" id="CHEBI:58228"/>
    </ligand>
</feature>
<feature type="binding site" evidence="1">
    <location>
        <position position="179"/>
    </location>
    <ligand>
        <name>L-aspartate</name>
        <dbReference type="ChEBI" id="CHEBI:29991"/>
    </ligand>
</feature>
<feature type="binding site" evidence="1">
    <location>
        <position position="234"/>
    </location>
    <ligand>
        <name>L-aspartate</name>
        <dbReference type="ChEBI" id="CHEBI:29991"/>
    </ligand>
</feature>
<feature type="binding site" evidence="1">
    <location>
        <position position="275"/>
    </location>
    <ligand>
        <name>carbamoyl phosphate</name>
        <dbReference type="ChEBI" id="CHEBI:58228"/>
    </ligand>
</feature>
<feature type="binding site" evidence="1">
    <location>
        <position position="276"/>
    </location>
    <ligand>
        <name>carbamoyl phosphate</name>
        <dbReference type="ChEBI" id="CHEBI:58228"/>
    </ligand>
</feature>
<accession>Q82U44</accession>
<name>PYRB_NITEU</name>
<dbReference type="EC" id="2.1.3.2" evidence="1"/>
<dbReference type="EMBL" id="AL954747">
    <property type="protein sequence ID" value="CAD85576.1"/>
    <property type="molecule type" value="Genomic_DNA"/>
</dbReference>
<dbReference type="RefSeq" id="WP_011112222.1">
    <property type="nucleotide sequence ID" value="NC_004757.1"/>
</dbReference>
<dbReference type="SMR" id="Q82U44"/>
<dbReference type="STRING" id="228410.NE1665"/>
<dbReference type="GeneID" id="87104829"/>
<dbReference type="KEGG" id="neu:NE1665"/>
<dbReference type="eggNOG" id="COG0540">
    <property type="taxonomic scope" value="Bacteria"/>
</dbReference>
<dbReference type="HOGENOM" id="CLU_043846_2_0_4"/>
<dbReference type="OrthoDB" id="9774690at2"/>
<dbReference type="PhylomeDB" id="Q82U44"/>
<dbReference type="UniPathway" id="UPA00070">
    <property type="reaction ID" value="UER00116"/>
</dbReference>
<dbReference type="Proteomes" id="UP000001416">
    <property type="component" value="Chromosome"/>
</dbReference>
<dbReference type="GO" id="GO:0005829">
    <property type="term" value="C:cytosol"/>
    <property type="evidence" value="ECO:0007669"/>
    <property type="project" value="TreeGrafter"/>
</dbReference>
<dbReference type="GO" id="GO:0016597">
    <property type="term" value="F:amino acid binding"/>
    <property type="evidence" value="ECO:0007669"/>
    <property type="project" value="InterPro"/>
</dbReference>
<dbReference type="GO" id="GO:0004070">
    <property type="term" value="F:aspartate carbamoyltransferase activity"/>
    <property type="evidence" value="ECO:0007669"/>
    <property type="project" value="UniProtKB-UniRule"/>
</dbReference>
<dbReference type="GO" id="GO:0006207">
    <property type="term" value="P:'de novo' pyrimidine nucleobase biosynthetic process"/>
    <property type="evidence" value="ECO:0007669"/>
    <property type="project" value="InterPro"/>
</dbReference>
<dbReference type="GO" id="GO:0044205">
    <property type="term" value="P:'de novo' UMP biosynthetic process"/>
    <property type="evidence" value="ECO:0007669"/>
    <property type="project" value="UniProtKB-UniRule"/>
</dbReference>
<dbReference type="GO" id="GO:0006520">
    <property type="term" value="P:amino acid metabolic process"/>
    <property type="evidence" value="ECO:0007669"/>
    <property type="project" value="InterPro"/>
</dbReference>
<dbReference type="FunFam" id="3.40.50.1370:FF:000007">
    <property type="entry name" value="Aspartate carbamoyltransferase"/>
    <property type="match status" value="1"/>
</dbReference>
<dbReference type="Gene3D" id="3.40.50.1370">
    <property type="entry name" value="Aspartate/ornithine carbamoyltransferase"/>
    <property type="match status" value="2"/>
</dbReference>
<dbReference type="HAMAP" id="MF_00001">
    <property type="entry name" value="Asp_carb_tr"/>
    <property type="match status" value="1"/>
</dbReference>
<dbReference type="InterPro" id="IPR006132">
    <property type="entry name" value="Asp/Orn_carbamoyltranf_P-bd"/>
</dbReference>
<dbReference type="InterPro" id="IPR006130">
    <property type="entry name" value="Asp/Orn_carbamoylTrfase"/>
</dbReference>
<dbReference type="InterPro" id="IPR036901">
    <property type="entry name" value="Asp/Orn_carbamoylTrfase_sf"/>
</dbReference>
<dbReference type="InterPro" id="IPR002082">
    <property type="entry name" value="Asp_carbamoyltransf"/>
</dbReference>
<dbReference type="InterPro" id="IPR006131">
    <property type="entry name" value="Asp_carbamoyltransf_Asp/Orn-bd"/>
</dbReference>
<dbReference type="NCBIfam" id="TIGR00670">
    <property type="entry name" value="asp_carb_tr"/>
    <property type="match status" value="1"/>
</dbReference>
<dbReference type="NCBIfam" id="NF002032">
    <property type="entry name" value="PRK00856.1"/>
    <property type="match status" value="1"/>
</dbReference>
<dbReference type="PANTHER" id="PTHR45753:SF6">
    <property type="entry name" value="ASPARTATE CARBAMOYLTRANSFERASE"/>
    <property type="match status" value="1"/>
</dbReference>
<dbReference type="PANTHER" id="PTHR45753">
    <property type="entry name" value="ORNITHINE CARBAMOYLTRANSFERASE, MITOCHONDRIAL"/>
    <property type="match status" value="1"/>
</dbReference>
<dbReference type="Pfam" id="PF00185">
    <property type="entry name" value="OTCace"/>
    <property type="match status" value="1"/>
</dbReference>
<dbReference type="Pfam" id="PF02729">
    <property type="entry name" value="OTCace_N"/>
    <property type="match status" value="1"/>
</dbReference>
<dbReference type="PRINTS" id="PR00100">
    <property type="entry name" value="AOTCASE"/>
</dbReference>
<dbReference type="PRINTS" id="PR00101">
    <property type="entry name" value="ATCASE"/>
</dbReference>
<dbReference type="SUPFAM" id="SSF53671">
    <property type="entry name" value="Aspartate/ornithine carbamoyltransferase"/>
    <property type="match status" value="1"/>
</dbReference>
<dbReference type="PROSITE" id="PS00097">
    <property type="entry name" value="CARBAMOYLTRANSFERASE"/>
    <property type="match status" value="1"/>
</dbReference>
<sequence length="316" mass="35146">MGVHPQLNKNGELQHLLTTEGLPAVILRHILDTAESFTGVTERDVKKIPLLRGKSVFNLFFEPSTRTRTTFEIAAKRLSADVINLNMAVSSQTKGETLLDTVDNLSAMHADMFIVRHNQSGAAHLIARHVRPEIHVINAGDGWHAHPTQALLDMFTIRRYKQDFHALRVAIIGDILHSRVARSQIHALTTLGVPEIRVIAPKTLLPAKVERLGVHVYHNMVQGLQDVDVLMMLRLQHERMESAHLPSTEEYFKYYGLTPEKLALARSDAIVMHPGPMNRGVEIDSEVADGTQSVILPQVNFGIAVRMAVMSILAGN</sequence>
<reference key="1">
    <citation type="journal article" date="2003" name="J. Bacteriol.">
        <title>Complete genome sequence of the ammonia-oxidizing bacterium and obligate chemolithoautotroph Nitrosomonas europaea.</title>
        <authorList>
            <person name="Chain P."/>
            <person name="Lamerdin J.E."/>
            <person name="Larimer F.W."/>
            <person name="Regala W."/>
            <person name="Lao V."/>
            <person name="Land M.L."/>
            <person name="Hauser L."/>
            <person name="Hooper A.B."/>
            <person name="Klotz M.G."/>
            <person name="Norton J."/>
            <person name="Sayavedra-Soto L.A."/>
            <person name="Arciero D.M."/>
            <person name="Hommes N.G."/>
            <person name="Whittaker M.M."/>
            <person name="Arp D.J."/>
        </authorList>
    </citation>
    <scope>NUCLEOTIDE SEQUENCE [LARGE SCALE GENOMIC DNA]</scope>
    <source>
        <strain>ATCC 19718 / CIP 103999 / KCTC 2705 / NBRC 14298</strain>
    </source>
</reference>
<keyword id="KW-0665">Pyrimidine biosynthesis</keyword>
<keyword id="KW-1185">Reference proteome</keyword>
<keyword id="KW-0808">Transferase</keyword>
<proteinExistence type="inferred from homology"/>
<protein>
    <recommendedName>
        <fullName evidence="1">Aspartate carbamoyltransferase catalytic subunit</fullName>
        <ecNumber evidence="1">2.1.3.2</ecNumber>
    </recommendedName>
    <alternativeName>
        <fullName evidence="1">Aspartate transcarbamylase</fullName>
        <shortName evidence="1">ATCase</shortName>
    </alternativeName>
</protein>
<organism>
    <name type="scientific">Nitrosomonas europaea (strain ATCC 19718 / CIP 103999 / KCTC 2705 / NBRC 14298)</name>
    <dbReference type="NCBI Taxonomy" id="228410"/>
    <lineage>
        <taxon>Bacteria</taxon>
        <taxon>Pseudomonadati</taxon>
        <taxon>Pseudomonadota</taxon>
        <taxon>Betaproteobacteria</taxon>
        <taxon>Nitrosomonadales</taxon>
        <taxon>Nitrosomonadaceae</taxon>
        <taxon>Nitrosomonas</taxon>
    </lineage>
</organism>
<gene>
    <name evidence="1" type="primary">pyrB</name>
    <name type="ordered locus">NE1665</name>
</gene>
<evidence type="ECO:0000255" key="1">
    <source>
        <dbReference type="HAMAP-Rule" id="MF_00001"/>
    </source>
</evidence>
<comment type="function">
    <text evidence="1">Catalyzes the condensation of carbamoyl phosphate and aspartate to form carbamoyl aspartate and inorganic phosphate, the committed step in the de novo pyrimidine nucleotide biosynthesis pathway.</text>
</comment>
<comment type="catalytic activity">
    <reaction evidence="1">
        <text>carbamoyl phosphate + L-aspartate = N-carbamoyl-L-aspartate + phosphate + H(+)</text>
        <dbReference type="Rhea" id="RHEA:20013"/>
        <dbReference type="ChEBI" id="CHEBI:15378"/>
        <dbReference type="ChEBI" id="CHEBI:29991"/>
        <dbReference type="ChEBI" id="CHEBI:32814"/>
        <dbReference type="ChEBI" id="CHEBI:43474"/>
        <dbReference type="ChEBI" id="CHEBI:58228"/>
        <dbReference type="EC" id="2.1.3.2"/>
    </reaction>
</comment>
<comment type="pathway">
    <text evidence="1">Pyrimidine metabolism; UMP biosynthesis via de novo pathway; (S)-dihydroorotate from bicarbonate: step 2/3.</text>
</comment>
<comment type="subunit">
    <text evidence="1">Heterododecamer (2C3:3R2) of six catalytic PyrB chains organized as two trimers (C3), and six regulatory PyrI chains organized as three dimers (R2).</text>
</comment>
<comment type="similarity">
    <text evidence="1">Belongs to the aspartate/ornithine carbamoyltransferase superfamily. ATCase family.</text>
</comment>